<reference key="1">
    <citation type="journal article" date="2002" name="Proc. Natl. Acad. Sci. U.S.A.">
        <title>Extensive mosaic structure revealed by the complete genome sequence of uropathogenic Escherichia coli.</title>
        <authorList>
            <person name="Welch R.A."/>
            <person name="Burland V."/>
            <person name="Plunkett G. III"/>
            <person name="Redford P."/>
            <person name="Roesch P."/>
            <person name="Rasko D."/>
            <person name="Buckles E.L."/>
            <person name="Liou S.-R."/>
            <person name="Boutin A."/>
            <person name="Hackett J."/>
            <person name="Stroud D."/>
            <person name="Mayhew G.F."/>
            <person name="Rose D.J."/>
            <person name="Zhou S."/>
            <person name="Schwartz D.C."/>
            <person name="Perna N.T."/>
            <person name="Mobley H.L.T."/>
            <person name="Donnenberg M.S."/>
            <person name="Blattner F.R."/>
        </authorList>
    </citation>
    <scope>NUCLEOTIDE SEQUENCE [LARGE SCALE GENOMIC DNA]</scope>
    <source>
        <strain>CFT073 / ATCC 700928 / UPEC</strain>
    </source>
</reference>
<sequence>MLVWLAEHLVKYYSGFNVFSYLTFRAIVSLLTALFISLWMGPRMIAHLQKLSFGQVVRNDGPESHFSKRGTPTMGGIMILTAIVISVLLWAYPSNPYVWCVLVVLVGYGVIGFVDDYRKVVRKDTKGLIARWKYFWMSVIALGVAFALYLVGKDTPATQLVVPFFKDVMPQLGLFYILLAYFVIVGTGNAVNLTDGLDGLAIMPTVFVAGGFALVAWATGNMNFASYLHIPYLRHAGELVIVCTAIVGAGLGFLWFNTYPAQVFMGDVGSLALGGALGIIAVLLRQEFLLVIMGGVFVVETLSVILQVGSFKLRGQRIFRMAPIHHHYELKGWPEPRVIVRFWIISLMLVLIGLATLKVR</sequence>
<gene>
    <name evidence="1" type="primary">mraY</name>
    <name type="ordered locus">c0105</name>
</gene>
<comment type="function">
    <text evidence="1">Catalyzes the initial step of the lipid cycle reactions in the biosynthesis of the cell wall peptidoglycan: transfers peptidoglycan precursor phospho-MurNAc-pentapeptide from UDP-MurNAc-pentapeptide onto the lipid carrier undecaprenyl phosphate, yielding undecaprenyl-pyrophosphoryl-MurNAc-pentapeptide, known as lipid I.</text>
</comment>
<comment type="catalytic activity">
    <reaction evidence="1">
        <text>UDP-N-acetyl-alpha-D-muramoyl-L-alanyl-gamma-D-glutamyl-meso-2,6-diaminopimeloyl-D-alanyl-D-alanine + di-trans,octa-cis-undecaprenyl phosphate = di-trans,octa-cis-undecaprenyl diphospho-N-acetyl-alpha-D-muramoyl-L-alanyl-D-glutamyl-meso-2,6-diaminopimeloyl-D-alanyl-D-alanine + UMP</text>
        <dbReference type="Rhea" id="RHEA:28386"/>
        <dbReference type="ChEBI" id="CHEBI:57865"/>
        <dbReference type="ChEBI" id="CHEBI:60392"/>
        <dbReference type="ChEBI" id="CHEBI:61386"/>
        <dbReference type="ChEBI" id="CHEBI:61387"/>
        <dbReference type="EC" id="2.7.8.13"/>
    </reaction>
</comment>
<comment type="cofactor">
    <cofactor evidence="1">
        <name>Mg(2+)</name>
        <dbReference type="ChEBI" id="CHEBI:18420"/>
    </cofactor>
</comment>
<comment type="pathway">
    <text evidence="1">Cell wall biogenesis; peptidoglycan biosynthesis.</text>
</comment>
<comment type="subcellular location">
    <subcellularLocation>
        <location evidence="1">Cell inner membrane</location>
        <topology evidence="1">Multi-pass membrane protein</topology>
    </subcellularLocation>
</comment>
<comment type="similarity">
    <text evidence="1 2">Belongs to the glycosyltransferase 4 family. MraY subfamily.</text>
</comment>
<proteinExistence type="inferred from homology"/>
<protein>
    <recommendedName>
        <fullName evidence="1">Phospho-N-acetylmuramoyl-pentapeptide-transferase</fullName>
        <ecNumber evidence="1">2.7.8.13</ecNumber>
    </recommendedName>
    <alternativeName>
        <fullName evidence="1">UDP-MurNAc-pentapeptide phosphotransferase</fullName>
    </alternativeName>
</protein>
<organism>
    <name type="scientific">Escherichia coli O6:H1 (strain CFT073 / ATCC 700928 / UPEC)</name>
    <dbReference type="NCBI Taxonomy" id="199310"/>
    <lineage>
        <taxon>Bacteria</taxon>
        <taxon>Pseudomonadati</taxon>
        <taxon>Pseudomonadota</taxon>
        <taxon>Gammaproteobacteria</taxon>
        <taxon>Enterobacterales</taxon>
        <taxon>Enterobacteriaceae</taxon>
        <taxon>Escherichia</taxon>
    </lineage>
</organism>
<keyword id="KW-0131">Cell cycle</keyword>
<keyword id="KW-0132">Cell division</keyword>
<keyword id="KW-0997">Cell inner membrane</keyword>
<keyword id="KW-1003">Cell membrane</keyword>
<keyword id="KW-0133">Cell shape</keyword>
<keyword id="KW-0961">Cell wall biogenesis/degradation</keyword>
<keyword id="KW-0460">Magnesium</keyword>
<keyword id="KW-0472">Membrane</keyword>
<keyword id="KW-0479">Metal-binding</keyword>
<keyword id="KW-0573">Peptidoglycan synthesis</keyword>
<keyword id="KW-1185">Reference proteome</keyword>
<keyword id="KW-0808">Transferase</keyword>
<keyword id="KW-0812">Transmembrane</keyword>
<keyword id="KW-1133">Transmembrane helix</keyword>
<name>MRAY_ECOL6</name>
<feature type="chain" id="PRO_0000108821" description="Phospho-N-acetylmuramoyl-pentapeptide-transferase">
    <location>
        <begin position="1"/>
        <end position="360"/>
    </location>
</feature>
<feature type="topological domain" description="Periplasmic" evidence="1">
    <location>
        <begin position="1"/>
        <end position="25"/>
    </location>
</feature>
<feature type="transmembrane region" description="Helical" evidence="1">
    <location>
        <begin position="26"/>
        <end position="46"/>
    </location>
</feature>
<feature type="topological domain" description="Cytoplasmic" evidence="1">
    <location>
        <begin position="47"/>
        <end position="71"/>
    </location>
</feature>
<feature type="transmembrane region" description="Helical" evidence="1">
    <location>
        <begin position="72"/>
        <end position="92"/>
    </location>
</feature>
<feature type="topological domain" description="Periplasmic" evidence="1">
    <location>
        <position position="93"/>
    </location>
</feature>
<feature type="transmembrane region" description="Helical" evidence="1">
    <location>
        <begin position="94"/>
        <end position="114"/>
    </location>
</feature>
<feature type="topological domain" description="Cytoplasmic" evidence="1">
    <location>
        <begin position="115"/>
        <end position="131"/>
    </location>
</feature>
<feature type="transmembrane region" description="Helical" evidence="1">
    <location>
        <begin position="132"/>
        <end position="152"/>
    </location>
</feature>
<feature type="topological domain" description="Periplasmic" evidence="1">
    <location>
        <begin position="153"/>
        <end position="167"/>
    </location>
</feature>
<feature type="transmembrane region" description="Helical" evidence="1">
    <location>
        <begin position="168"/>
        <end position="188"/>
    </location>
</feature>
<feature type="topological domain" description="Cytoplasmic" evidence="1">
    <location>
        <begin position="189"/>
        <end position="198"/>
    </location>
</feature>
<feature type="transmembrane region" description="Helical" evidence="1">
    <location>
        <begin position="199"/>
        <end position="219"/>
    </location>
</feature>
<feature type="topological domain" description="Periplasmic" evidence="1">
    <location>
        <begin position="220"/>
        <end position="235"/>
    </location>
</feature>
<feature type="transmembrane region" description="Helical" evidence="1">
    <location>
        <begin position="236"/>
        <end position="256"/>
    </location>
</feature>
<feature type="topological domain" description="Cytoplasmic" evidence="1">
    <location>
        <begin position="257"/>
        <end position="262"/>
    </location>
</feature>
<feature type="transmembrane region" description="Helical" evidence="1">
    <location>
        <begin position="263"/>
        <end position="283"/>
    </location>
</feature>
<feature type="topological domain" description="Periplasmic" evidence="1">
    <location>
        <begin position="284"/>
        <end position="287"/>
    </location>
</feature>
<feature type="transmembrane region" description="Helical" evidence="1">
    <location>
        <begin position="288"/>
        <end position="308"/>
    </location>
</feature>
<feature type="topological domain" description="Cytoplasmic" evidence="1">
    <location>
        <begin position="309"/>
        <end position="337"/>
    </location>
</feature>
<feature type="transmembrane region" description="Helical" evidence="1">
    <location>
        <begin position="338"/>
        <end position="358"/>
    </location>
</feature>
<feature type="topological domain" description="Periplasmic" evidence="1">
    <location>
        <begin position="359"/>
        <end position="360"/>
    </location>
</feature>
<accession>P64257</accession>
<accession>Q8X9Z0</accession>
<dbReference type="EC" id="2.7.8.13" evidence="1"/>
<dbReference type="EMBL" id="AE014075">
    <property type="protein sequence ID" value="AAN78603.1"/>
    <property type="molecule type" value="Genomic_DNA"/>
</dbReference>
<dbReference type="RefSeq" id="WP_000964134.1">
    <property type="nucleotide sequence ID" value="NZ_CP051263.1"/>
</dbReference>
<dbReference type="SMR" id="P64257"/>
<dbReference type="STRING" id="199310.c0105"/>
<dbReference type="GeneID" id="75169987"/>
<dbReference type="KEGG" id="ecc:c0105"/>
<dbReference type="eggNOG" id="COG0472">
    <property type="taxonomic scope" value="Bacteria"/>
</dbReference>
<dbReference type="HOGENOM" id="CLU_023982_0_0_6"/>
<dbReference type="BioCyc" id="ECOL199310:C0105-MONOMER"/>
<dbReference type="UniPathway" id="UPA00219"/>
<dbReference type="Proteomes" id="UP000001410">
    <property type="component" value="Chromosome"/>
</dbReference>
<dbReference type="GO" id="GO:0005886">
    <property type="term" value="C:plasma membrane"/>
    <property type="evidence" value="ECO:0007669"/>
    <property type="project" value="UniProtKB-SubCell"/>
</dbReference>
<dbReference type="GO" id="GO:0046872">
    <property type="term" value="F:metal ion binding"/>
    <property type="evidence" value="ECO:0007669"/>
    <property type="project" value="UniProtKB-KW"/>
</dbReference>
<dbReference type="GO" id="GO:0008963">
    <property type="term" value="F:phospho-N-acetylmuramoyl-pentapeptide-transferase activity"/>
    <property type="evidence" value="ECO:0007669"/>
    <property type="project" value="UniProtKB-UniRule"/>
</dbReference>
<dbReference type="GO" id="GO:0051992">
    <property type="term" value="F:UDP-N-acetylmuramoyl-L-alanyl-D-glutamyl-meso-2,6-diaminopimelyl-D-alanyl-D-alanine:undecaprenyl-phosphate transferase activity"/>
    <property type="evidence" value="ECO:0007669"/>
    <property type="project" value="RHEA"/>
</dbReference>
<dbReference type="GO" id="GO:0051301">
    <property type="term" value="P:cell division"/>
    <property type="evidence" value="ECO:0007669"/>
    <property type="project" value="UniProtKB-KW"/>
</dbReference>
<dbReference type="GO" id="GO:0071555">
    <property type="term" value="P:cell wall organization"/>
    <property type="evidence" value="ECO:0007669"/>
    <property type="project" value="UniProtKB-KW"/>
</dbReference>
<dbReference type="GO" id="GO:0009252">
    <property type="term" value="P:peptidoglycan biosynthetic process"/>
    <property type="evidence" value="ECO:0007669"/>
    <property type="project" value="UniProtKB-UniRule"/>
</dbReference>
<dbReference type="GO" id="GO:0008360">
    <property type="term" value="P:regulation of cell shape"/>
    <property type="evidence" value="ECO:0007669"/>
    <property type="project" value="UniProtKB-KW"/>
</dbReference>
<dbReference type="CDD" id="cd06852">
    <property type="entry name" value="GT_MraY"/>
    <property type="match status" value="1"/>
</dbReference>
<dbReference type="HAMAP" id="MF_00038">
    <property type="entry name" value="MraY"/>
    <property type="match status" value="1"/>
</dbReference>
<dbReference type="InterPro" id="IPR000715">
    <property type="entry name" value="Glycosyl_transferase_4"/>
</dbReference>
<dbReference type="InterPro" id="IPR003524">
    <property type="entry name" value="PNAcMuramoyl-5peptid_Trfase"/>
</dbReference>
<dbReference type="InterPro" id="IPR018480">
    <property type="entry name" value="PNAcMuramoyl-5peptid_Trfase_CS"/>
</dbReference>
<dbReference type="NCBIfam" id="TIGR00445">
    <property type="entry name" value="mraY"/>
    <property type="match status" value="1"/>
</dbReference>
<dbReference type="PANTHER" id="PTHR22926">
    <property type="entry name" value="PHOSPHO-N-ACETYLMURAMOYL-PENTAPEPTIDE-TRANSFERASE"/>
    <property type="match status" value="1"/>
</dbReference>
<dbReference type="PANTHER" id="PTHR22926:SF5">
    <property type="entry name" value="PHOSPHO-N-ACETYLMURAMOYL-PENTAPEPTIDE-TRANSFERASE HOMOLOG"/>
    <property type="match status" value="1"/>
</dbReference>
<dbReference type="Pfam" id="PF00953">
    <property type="entry name" value="Glycos_transf_4"/>
    <property type="match status" value="1"/>
</dbReference>
<dbReference type="Pfam" id="PF10555">
    <property type="entry name" value="MraY_sig1"/>
    <property type="match status" value="1"/>
</dbReference>
<dbReference type="PROSITE" id="PS01347">
    <property type="entry name" value="MRAY_1"/>
    <property type="match status" value="1"/>
</dbReference>
<dbReference type="PROSITE" id="PS01348">
    <property type="entry name" value="MRAY_2"/>
    <property type="match status" value="1"/>
</dbReference>
<evidence type="ECO:0000255" key="1">
    <source>
        <dbReference type="HAMAP-Rule" id="MF_00038"/>
    </source>
</evidence>
<evidence type="ECO:0000305" key="2"/>